<name>IF6_TRYCR</name>
<protein>
    <recommendedName>
        <fullName>Eukaryotic translation initiation factor 6</fullName>
        <shortName>eIF-6</shortName>
    </recommendedName>
</protein>
<reference key="1">
    <citation type="submission" date="1999-01" db="EMBL/GenBank/DDBJ databases">
        <title>T. cruzi SZ5 locus DNA.</title>
        <authorList>
            <person name="Lorenzi H."/>
            <person name="Catalani M."/>
            <person name="Levin M.J."/>
        </authorList>
    </citation>
    <scope>NUCLEOTIDE SEQUENCE [GENOMIC DNA]</scope>
    <source>
        <strain>Tulahuen</strain>
    </source>
</reference>
<organism>
    <name type="scientific">Trypanosoma cruzi</name>
    <dbReference type="NCBI Taxonomy" id="5693"/>
    <lineage>
        <taxon>Eukaryota</taxon>
        <taxon>Discoba</taxon>
        <taxon>Euglenozoa</taxon>
        <taxon>Kinetoplastea</taxon>
        <taxon>Metakinetoplastina</taxon>
        <taxon>Trypanosomatida</taxon>
        <taxon>Trypanosomatidae</taxon>
        <taxon>Trypanosoma</taxon>
        <taxon>Schizotrypanum</taxon>
    </lineage>
</organism>
<dbReference type="EMBL" id="AF117890">
    <property type="protein sequence ID" value="AAD24769.1"/>
    <property type="molecule type" value="Genomic_DNA"/>
</dbReference>
<dbReference type="SMR" id="Q9XYP3"/>
<dbReference type="VEuPathDB" id="TriTrypDB:BCY84_16188"/>
<dbReference type="VEuPathDB" id="TriTrypDB:C3747_7g428"/>
<dbReference type="VEuPathDB" id="TriTrypDB:C4B63_13g230"/>
<dbReference type="VEuPathDB" id="TriTrypDB:ECC02_003892"/>
<dbReference type="VEuPathDB" id="TriTrypDB:Tc_MARK_8534"/>
<dbReference type="VEuPathDB" id="TriTrypDB:TcBrA4_0004090"/>
<dbReference type="VEuPathDB" id="TriTrypDB:TcCL_NonESM10874"/>
<dbReference type="VEuPathDB" id="TriTrypDB:TcCLB.506679.70"/>
<dbReference type="VEuPathDB" id="TriTrypDB:TCDM_01143"/>
<dbReference type="VEuPathDB" id="TriTrypDB:TcG_09439"/>
<dbReference type="VEuPathDB" id="TriTrypDB:TCSYLVIO_009989"/>
<dbReference type="VEuPathDB" id="TriTrypDB:TcYC6_0079840"/>
<dbReference type="GO" id="GO:0005737">
    <property type="term" value="C:cytoplasm"/>
    <property type="evidence" value="ECO:0007669"/>
    <property type="project" value="UniProtKB-SubCell"/>
</dbReference>
<dbReference type="GO" id="GO:0005730">
    <property type="term" value="C:nucleolus"/>
    <property type="evidence" value="ECO:0007669"/>
    <property type="project" value="UniProtKB-SubCell"/>
</dbReference>
<dbReference type="GO" id="GO:0043022">
    <property type="term" value="F:ribosome binding"/>
    <property type="evidence" value="ECO:0007669"/>
    <property type="project" value="InterPro"/>
</dbReference>
<dbReference type="GO" id="GO:0003743">
    <property type="term" value="F:translation initiation factor activity"/>
    <property type="evidence" value="ECO:0007669"/>
    <property type="project" value="UniProtKB-KW"/>
</dbReference>
<dbReference type="GO" id="GO:0042256">
    <property type="term" value="P:cytosolic ribosome assembly"/>
    <property type="evidence" value="ECO:0007669"/>
    <property type="project" value="InterPro"/>
</dbReference>
<dbReference type="Gene3D" id="3.75.10.10">
    <property type="entry name" value="L-arginine/glycine Amidinotransferase, Chain A"/>
    <property type="match status" value="1"/>
</dbReference>
<dbReference type="InterPro" id="IPR002769">
    <property type="entry name" value="eIF6"/>
</dbReference>
<dbReference type="PANTHER" id="PTHR10784">
    <property type="entry name" value="TRANSLATION INITIATION FACTOR 6"/>
    <property type="match status" value="1"/>
</dbReference>
<dbReference type="Pfam" id="PF01912">
    <property type="entry name" value="eIF-6"/>
    <property type="match status" value="1"/>
</dbReference>
<dbReference type="SMART" id="SM00654">
    <property type="entry name" value="eIF6"/>
    <property type="match status" value="1"/>
</dbReference>
<dbReference type="SUPFAM" id="SSF55909">
    <property type="entry name" value="Pentein"/>
    <property type="match status" value="1"/>
</dbReference>
<accession>Q9XYP3</accession>
<comment type="function">
    <text evidence="1">Binds to the 60S ribosomal subunit and prevents its association with the 40S ribosomal subunit to form the 80S initiation complex in the cytoplasm. May also be involved in ribosome biogenesis (By similarity).</text>
</comment>
<comment type="subunit">
    <text evidence="1">Monomer. Associates with the 60S ribosomal subunit (By similarity).</text>
</comment>
<comment type="subcellular location">
    <subcellularLocation>
        <location evidence="1">Cytoplasm</location>
    </subcellularLocation>
    <subcellularLocation>
        <location evidence="1">Nucleus</location>
        <location evidence="1">Nucleolus</location>
    </subcellularLocation>
    <text evidence="1">Shuttles between cytoplasm and nucleus/nucleolus.</text>
</comment>
<comment type="similarity">
    <text evidence="2">Belongs to the eIF-6 family.</text>
</comment>
<proteinExistence type="inferred from homology"/>
<keyword id="KW-0963">Cytoplasm</keyword>
<keyword id="KW-0396">Initiation factor</keyword>
<keyword id="KW-0539">Nucleus</keyword>
<keyword id="KW-0648">Protein biosynthesis</keyword>
<keyword id="KW-0690">Ribosome biogenesis</keyword>
<evidence type="ECO:0000250" key="1"/>
<evidence type="ECO:0000305" key="2"/>
<feature type="chain" id="PRO_0000153738" description="Eukaryotic translation initiation factor 6">
    <location>
        <begin position="1" status="less than"/>
        <end position="114"/>
    </location>
</feature>
<feature type="non-terminal residue">
    <location>
        <position position="1"/>
    </location>
</feature>
<sequence>GTTFRTSIAENALVGSYAVVNNKGCMVHPKTPAQDMDEIASLLQVPVVAGTINRGNAAIGSGLVVNDWAAFCGLNTTATEITVVERIFQLRRDLGGGRANLLQQLRDTLVDELA</sequence>